<accession>P40187</accession>
<accession>D6VVN7</accession>
<accession>E9P960</accession>
<gene>
    <name type="primary">PIG2</name>
    <name type="ordered locus">YIL045W</name>
</gene>
<evidence type="ECO:0000255" key="1">
    <source>
        <dbReference type="PROSITE-ProRule" id="PRU00491"/>
    </source>
</evidence>
<evidence type="ECO:0000269" key="2">
    <source>
    </source>
</evidence>
<evidence type="ECO:0000305" key="3"/>
<evidence type="ECO:0007744" key="4">
    <source>
    </source>
</evidence>
<evidence type="ECO:0007744" key="5">
    <source>
    </source>
</evidence>
<evidence type="ECO:0007744" key="6">
    <source>
    </source>
</evidence>
<organism>
    <name type="scientific">Saccharomyces cerevisiae (strain ATCC 204508 / S288c)</name>
    <name type="common">Baker's yeast</name>
    <dbReference type="NCBI Taxonomy" id="559292"/>
    <lineage>
        <taxon>Eukaryota</taxon>
        <taxon>Fungi</taxon>
        <taxon>Dikarya</taxon>
        <taxon>Ascomycota</taxon>
        <taxon>Saccharomycotina</taxon>
        <taxon>Saccharomycetes</taxon>
        <taxon>Saccharomycetales</taxon>
        <taxon>Saccharomycetaceae</taxon>
        <taxon>Saccharomyces</taxon>
    </lineage>
</organism>
<keyword id="KW-0597">Phosphoprotein</keyword>
<keyword id="KW-1185">Reference proteome</keyword>
<reference key="1">
    <citation type="journal article" date="1997" name="Nature">
        <title>The nucleotide sequence of Saccharomyces cerevisiae chromosome IX.</title>
        <authorList>
            <person name="Churcher C.M."/>
            <person name="Bowman S."/>
            <person name="Badcock K."/>
            <person name="Bankier A.T."/>
            <person name="Brown D."/>
            <person name="Chillingworth T."/>
            <person name="Connor R."/>
            <person name="Devlin K."/>
            <person name="Gentles S."/>
            <person name="Hamlin N."/>
            <person name="Harris D.E."/>
            <person name="Horsnell T."/>
            <person name="Hunt S."/>
            <person name="Jagels K."/>
            <person name="Jones M."/>
            <person name="Lye G."/>
            <person name="Moule S."/>
            <person name="Odell C."/>
            <person name="Pearson D."/>
            <person name="Rajandream M.A."/>
            <person name="Rice P."/>
            <person name="Rowley N."/>
            <person name="Skelton J."/>
            <person name="Smith V."/>
            <person name="Walsh S.V."/>
            <person name="Whitehead S."/>
            <person name="Barrell B.G."/>
        </authorList>
    </citation>
    <scope>NUCLEOTIDE SEQUENCE [LARGE SCALE GENOMIC DNA]</scope>
    <source>
        <strain>ATCC 204508 / S288c</strain>
    </source>
</reference>
<reference key="2">
    <citation type="journal article" date="2014" name="G3 (Bethesda)">
        <title>The reference genome sequence of Saccharomyces cerevisiae: Then and now.</title>
        <authorList>
            <person name="Engel S.R."/>
            <person name="Dietrich F.S."/>
            <person name="Fisk D.G."/>
            <person name="Binkley G."/>
            <person name="Balakrishnan R."/>
            <person name="Costanzo M.C."/>
            <person name="Dwight S.S."/>
            <person name="Hitz B.C."/>
            <person name="Karra K."/>
            <person name="Nash R.S."/>
            <person name="Weng S."/>
            <person name="Wong E.D."/>
            <person name="Lloyd P."/>
            <person name="Skrzypek M.S."/>
            <person name="Miyasato S.R."/>
            <person name="Simison M."/>
            <person name="Cherry J.M."/>
        </authorList>
    </citation>
    <scope>GENOME REANNOTATION</scope>
    <source>
        <strain>ATCC 204508 / S288c</strain>
    </source>
</reference>
<reference key="3">
    <citation type="journal article" date="2007" name="Genome Res.">
        <title>Approaching a complete repository of sequence-verified protein-encoding clones for Saccharomyces cerevisiae.</title>
        <authorList>
            <person name="Hu Y."/>
            <person name="Rolfs A."/>
            <person name="Bhullar B."/>
            <person name="Murthy T.V.S."/>
            <person name="Zhu C."/>
            <person name="Berger M.F."/>
            <person name="Camargo A.A."/>
            <person name="Kelley F."/>
            <person name="McCarron S."/>
            <person name="Jepson D."/>
            <person name="Richardson A."/>
            <person name="Raphael J."/>
            <person name="Moreira D."/>
            <person name="Taycher E."/>
            <person name="Zuo D."/>
            <person name="Mohr S."/>
            <person name="Kane M.F."/>
            <person name="Williamson J."/>
            <person name="Simpson A.J.G."/>
            <person name="Bulyk M.L."/>
            <person name="Harlow E."/>
            <person name="Marsischky G."/>
            <person name="Kolodner R.D."/>
            <person name="LaBaer J."/>
        </authorList>
    </citation>
    <scope>NUCLEOTIDE SEQUENCE [GENOMIC DNA]</scope>
    <source>
        <strain>ATCC 204508 / S288c</strain>
    </source>
</reference>
<reference key="4">
    <citation type="journal article" date="1997" name="Yeast">
        <title>Yeast PIG genes: PIG1 encodes a putative type 1 phosphatase subunit that interacts with the yeast glycogen synthase Gsy2p.</title>
        <authorList>
            <person name="Cheng C."/>
            <person name="Huang D."/>
            <person name="Roach P.J."/>
        </authorList>
    </citation>
    <scope>PARTIAL NUCLEOTIDE SEQUENCE</scope>
    <scope>CHARACTERIZATION</scope>
</reference>
<reference key="5">
    <citation type="journal article" date="2003" name="Nature">
        <title>Global analysis of protein expression in yeast.</title>
        <authorList>
            <person name="Ghaemmaghami S."/>
            <person name="Huh W.-K."/>
            <person name="Bower K."/>
            <person name="Howson R.W."/>
            <person name="Belle A."/>
            <person name="Dephoure N."/>
            <person name="O'Shea E.K."/>
            <person name="Weissman J.S."/>
        </authorList>
    </citation>
    <scope>LEVEL OF PROTEIN EXPRESSION [LARGE SCALE ANALYSIS]</scope>
</reference>
<reference key="6">
    <citation type="journal article" date="2007" name="J. Proteome Res.">
        <title>Large-scale phosphorylation analysis of alpha-factor-arrested Saccharomyces cerevisiae.</title>
        <authorList>
            <person name="Li X."/>
            <person name="Gerber S.A."/>
            <person name="Rudner A.D."/>
            <person name="Beausoleil S.A."/>
            <person name="Haas W."/>
            <person name="Villen J."/>
            <person name="Elias J.E."/>
            <person name="Gygi S.P."/>
        </authorList>
    </citation>
    <scope>PHOSPHORYLATION [LARGE SCALE ANALYSIS] AT SER-162</scope>
    <scope>IDENTIFICATION BY MASS SPECTROMETRY [LARGE SCALE ANALYSIS]</scope>
    <source>
        <strain>ADR376</strain>
    </source>
</reference>
<reference key="7">
    <citation type="journal article" date="2007" name="Proc. Natl. Acad. Sci. U.S.A.">
        <title>Analysis of phosphorylation sites on proteins from Saccharomyces cerevisiae by electron transfer dissociation (ETD) mass spectrometry.</title>
        <authorList>
            <person name="Chi A."/>
            <person name="Huttenhower C."/>
            <person name="Geer L.Y."/>
            <person name="Coon J.J."/>
            <person name="Syka J.E.P."/>
            <person name="Bai D.L."/>
            <person name="Shabanowitz J."/>
            <person name="Burke D.J."/>
            <person name="Troyanskaya O.G."/>
            <person name="Hunt D.F."/>
        </authorList>
    </citation>
    <scope>PHOSPHORYLATION [LARGE SCALE ANALYSIS] AT SER-162 AND SER-196</scope>
    <scope>IDENTIFICATION BY MASS SPECTROMETRY [LARGE SCALE ANALYSIS]</scope>
</reference>
<reference key="8">
    <citation type="journal article" date="2008" name="Mol. Cell. Proteomics">
        <title>A multidimensional chromatography technology for in-depth phosphoproteome analysis.</title>
        <authorList>
            <person name="Albuquerque C.P."/>
            <person name="Smolka M.B."/>
            <person name="Payne S.H."/>
            <person name="Bafna V."/>
            <person name="Eng J."/>
            <person name="Zhou H."/>
        </authorList>
    </citation>
    <scope>IDENTIFICATION BY MASS SPECTROMETRY [LARGE SCALE ANALYSIS]</scope>
</reference>
<reference key="9">
    <citation type="journal article" date="2009" name="Science">
        <title>Global analysis of Cdk1 substrate phosphorylation sites provides insights into evolution.</title>
        <authorList>
            <person name="Holt L.J."/>
            <person name="Tuch B.B."/>
            <person name="Villen J."/>
            <person name="Johnson A.D."/>
            <person name="Gygi S.P."/>
            <person name="Morgan D.O."/>
        </authorList>
    </citation>
    <scope>PHOSPHORYLATION [LARGE SCALE ANALYSIS] AT SER-296 AND SER-304</scope>
    <scope>IDENTIFICATION BY MASS SPECTROMETRY [LARGE SCALE ANALYSIS]</scope>
</reference>
<sequence length="538" mass="61938">MATTTQPQNILMDEPLNLPNNSAHNNNYGNINANIRTFAGMSMHMHPARLNSLEFLHKPRRLSNVKLHRLPQDELQRNTDMNKGMYFNGKQVHAHHPFINSGANFNAHHQDVSKLGEEEDEISPLSHDNFQYESEENGNPSPPIYKKSGELVKSSLKRRSKSLPITPKSIFNKTGSKSKHVNLDHVDTRLLQRSKSVHFDRVLPIKLFNENEKPIDVGKQMVQQDVLNFKHKPLTRLSALNGGSDSVPIEDLLSENNQNEYGDTWLQNPKGVFLFGTNSNNRRNKKKKFKLSDDDSDIENDNDSDDAINRLVRQQDKDQAHLAHGLKNLLINDDDDYLETRTNSAKSGANLFIGNSKRIVGLYNKNFPILSDRNRKSLKLNIFLNLSRGRPVFLQEITLLTGFHNMVIIGKVFVKNIYFDKKIIVRYTWDAWRTFHESECVYFSNANGILPGSNMDIFKFSIDDIHNPNDKDSNISQLEFCIQYLTWGVDRSRKEYWDNNDSANYKIDVVTNETRTGPTTDVNDNYEMKHSLFRNPFH</sequence>
<protein>
    <recommendedName>
        <fullName>GSY2-interacting protein PIG2</fullName>
    </recommendedName>
</protein>
<comment type="function">
    <text>Interacts with glycogen synthase 2 (GSY2); possibly also interacts with phosphatase 1 (GLC7).</text>
</comment>
<comment type="miscellaneous">
    <text evidence="2">Present with 996 molecules/cell in log phase SD medium.</text>
</comment>
<name>PIG2_YEAST</name>
<proteinExistence type="evidence at protein level"/>
<feature type="chain" id="PRO_0000071522" description="GSY2-interacting protein PIG2">
    <location>
        <begin position="1"/>
        <end position="538"/>
    </location>
</feature>
<feature type="domain" description="CBM21" evidence="1">
    <location>
        <begin position="384"/>
        <end position="508"/>
    </location>
</feature>
<feature type="modified residue" description="Phosphoserine" evidence="4 5">
    <location>
        <position position="162"/>
    </location>
</feature>
<feature type="modified residue" description="Phosphoserine" evidence="4">
    <location>
        <position position="196"/>
    </location>
</feature>
<feature type="modified residue" description="Phosphoserine" evidence="6">
    <location>
        <position position="296"/>
    </location>
</feature>
<feature type="modified residue" description="Phosphoserine" evidence="6">
    <location>
        <position position="304"/>
    </location>
</feature>
<feature type="sequence conflict" description="In Ref. 3; AAU09747." evidence="3" ref="3">
    <original>F</original>
    <variation>L</variation>
    <location>
        <position position="537"/>
    </location>
</feature>
<dbReference type="EMBL" id="Z46861">
    <property type="protein sequence ID" value="CAA86906.1"/>
    <property type="molecule type" value="Genomic_DNA"/>
</dbReference>
<dbReference type="EMBL" id="AY723830">
    <property type="protein sequence ID" value="AAU09747.1"/>
    <property type="molecule type" value="Genomic_DNA"/>
</dbReference>
<dbReference type="EMBL" id="BK006942">
    <property type="protein sequence ID" value="DAA08503.1"/>
    <property type="molecule type" value="Genomic_DNA"/>
</dbReference>
<dbReference type="PIR" id="S49933">
    <property type="entry name" value="S49933"/>
</dbReference>
<dbReference type="RefSeq" id="NP_012219.3">
    <property type="nucleotide sequence ID" value="NM_001179395.3"/>
</dbReference>
<dbReference type="SMR" id="P40187"/>
<dbReference type="BioGRID" id="34945">
    <property type="interactions" value="65"/>
</dbReference>
<dbReference type="DIP" id="DIP-5191N"/>
<dbReference type="FunCoup" id="P40187">
    <property type="interactions" value="120"/>
</dbReference>
<dbReference type="IntAct" id="P40187">
    <property type="interactions" value="17"/>
</dbReference>
<dbReference type="MINT" id="P40187"/>
<dbReference type="STRING" id="4932.YIL045W"/>
<dbReference type="CAZy" id="CBM21">
    <property type="family name" value="Carbohydrate-Binding Module Family 21"/>
</dbReference>
<dbReference type="iPTMnet" id="P40187"/>
<dbReference type="PaxDb" id="4932-YIL045W"/>
<dbReference type="PeptideAtlas" id="P40187"/>
<dbReference type="EnsemblFungi" id="YIL045W_mRNA">
    <property type="protein sequence ID" value="YIL045W"/>
    <property type="gene ID" value="YIL045W"/>
</dbReference>
<dbReference type="GeneID" id="854766"/>
<dbReference type="KEGG" id="sce:YIL045W"/>
<dbReference type="AGR" id="SGD:S000001307"/>
<dbReference type="SGD" id="S000001307">
    <property type="gene designation" value="PIG2"/>
</dbReference>
<dbReference type="VEuPathDB" id="FungiDB:YIL045W"/>
<dbReference type="eggNOG" id="KOG3986">
    <property type="taxonomic scope" value="Eukaryota"/>
</dbReference>
<dbReference type="GeneTree" id="ENSGT00940000174300"/>
<dbReference type="HOGENOM" id="CLU_017894_0_0_1"/>
<dbReference type="InParanoid" id="P40187"/>
<dbReference type="OMA" id="NEYGDTW"/>
<dbReference type="OrthoDB" id="1881at2759"/>
<dbReference type="BioCyc" id="YEAST:G3O-31316-MONOMER"/>
<dbReference type="Reactome" id="R-SCE-3322077">
    <property type="pathway name" value="Glycogen synthesis"/>
</dbReference>
<dbReference type="BioGRID-ORCS" id="854766">
    <property type="hits" value="0 hits in 10 CRISPR screens"/>
</dbReference>
<dbReference type="PRO" id="PR:P40187"/>
<dbReference type="Proteomes" id="UP000002311">
    <property type="component" value="Chromosome IX"/>
</dbReference>
<dbReference type="RNAct" id="P40187">
    <property type="molecule type" value="protein"/>
</dbReference>
<dbReference type="GO" id="GO:0005737">
    <property type="term" value="C:cytoplasm"/>
    <property type="evidence" value="ECO:0007005"/>
    <property type="project" value="SGD"/>
</dbReference>
<dbReference type="GO" id="GO:0000164">
    <property type="term" value="C:protein phosphatase type 1 complex"/>
    <property type="evidence" value="ECO:0000318"/>
    <property type="project" value="GO_Central"/>
</dbReference>
<dbReference type="GO" id="GO:2001069">
    <property type="term" value="F:glycogen binding"/>
    <property type="evidence" value="ECO:0000318"/>
    <property type="project" value="GO_Central"/>
</dbReference>
<dbReference type="GO" id="GO:0008157">
    <property type="term" value="F:protein phosphatase 1 binding"/>
    <property type="evidence" value="ECO:0000318"/>
    <property type="project" value="GO_Central"/>
</dbReference>
<dbReference type="GO" id="GO:0019888">
    <property type="term" value="F:protein phosphatase regulator activity"/>
    <property type="evidence" value="ECO:0000247"/>
    <property type="project" value="SGD"/>
</dbReference>
<dbReference type="GO" id="GO:0005979">
    <property type="term" value="P:regulation of glycogen biosynthetic process"/>
    <property type="evidence" value="ECO:0000353"/>
    <property type="project" value="SGD"/>
</dbReference>
<dbReference type="FunFam" id="2.60.40.2440:FF:000008">
    <property type="entry name" value="Type-1 protein phosphatase regulatory subunit"/>
    <property type="match status" value="1"/>
</dbReference>
<dbReference type="Gene3D" id="2.60.40.2440">
    <property type="entry name" value="Carbohydrate binding type-21 domain"/>
    <property type="match status" value="1"/>
</dbReference>
<dbReference type="InterPro" id="IPR005036">
    <property type="entry name" value="CBM21_dom"/>
</dbReference>
<dbReference type="InterPro" id="IPR038175">
    <property type="entry name" value="CBM21_dom_sf"/>
</dbReference>
<dbReference type="InterPro" id="IPR016717">
    <property type="entry name" value="Gip2/Pig2"/>
</dbReference>
<dbReference type="InterPro" id="IPR050782">
    <property type="entry name" value="PP1_regulatory_subunit_3"/>
</dbReference>
<dbReference type="PANTHER" id="PTHR12307:SF36">
    <property type="entry name" value="GLYCOGEN-BINDING SUBUNIT 76A"/>
    <property type="match status" value="1"/>
</dbReference>
<dbReference type="PANTHER" id="PTHR12307">
    <property type="entry name" value="PROTEIN PHOSPHATASE 1 REGULATORY SUBUNIT"/>
    <property type="match status" value="1"/>
</dbReference>
<dbReference type="Pfam" id="PF03370">
    <property type="entry name" value="CBM_21"/>
    <property type="match status" value="1"/>
</dbReference>
<dbReference type="PIRSF" id="PIRSF018234">
    <property type="entry name" value="PPase_interacting"/>
    <property type="match status" value="1"/>
</dbReference>
<dbReference type="PROSITE" id="PS51159">
    <property type="entry name" value="CBM21"/>
    <property type="match status" value="1"/>
</dbReference>